<reference key="1">
    <citation type="submission" date="2003-11" db="EMBL/GenBank/DDBJ databases">
        <authorList>
            <consortium name="NIH - Xenopus Gene Collection (XGC) project"/>
        </authorList>
    </citation>
    <scope>NUCLEOTIDE SEQUENCE [LARGE SCALE MRNA]</scope>
    <source>
        <tissue>Embryo</tissue>
    </source>
</reference>
<proteinExistence type="evidence at transcript level"/>
<keyword id="KW-0158">Chromosome</keyword>
<keyword id="KW-0227">DNA damage</keyword>
<keyword id="KW-0233">DNA recombination</keyword>
<keyword id="KW-0234">DNA repair</keyword>
<keyword id="KW-0479">Metal-binding</keyword>
<keyword id="KW-0539">Nucleus</keyword>
<keyword id="KW-1185">Reference proteome</keyword>
<keyword id="KW-0779">Telomere</keyword>
<keyword id="KW-0808">Transferase</keyword>
<keyword id="KW-0833">Ubl conjugation pathway</keyword>
<keyword id="KW-0862">Zinc</keyword>
<keyword id="KW-0863">Zinc-finger</keyword>
<accession>Q6P881</accession>
<evidence type="ECO:0000250" key="1">
    <source>
        <dbReference type="UniProtKB" id="Q8WV22"/>
    </source>
</evidence>
<evidence type="ECO:0000255" key="2">
    <source>
        <dbReference type="PROSITE-ProRule" id="PRU00175"/>
    </source>
</evidence>
<evidence type="ECO:0000256" key="3">
    <source>
        <dbReference type="SAM" id="MobiDB-lite"/>
    </source>
</evidence>
<evidence type="ECO:0000305" key="4"/>
<feature type="chain" id="PRO_0000270950" description="Non-structural maintenance of chromosomes element 1 homolog">
    <location>
        <begin position="1"/>
        <end position="270"/>
    </location>
</feature>
<feature type="zinc finger region" description="RING-type; atypical" evidence="2">
    <location>
        <begin position="185"/>
        <end position="226"/>
    </location>
</feature>
<feature type="region of interest" description="Disordered" evidence="3">
    <location>
        <begin position="236"/>
        <end position="270"/>
    </location>
</feature>
<feature type="compositionally biased region" description="Polar residues" evidence="3">
    <location>
        <begin position="237"/>
        <end position="248"/>
    </location>
</feature>
<feature type="compositionally biased region" description="Polar residues" evidence="3">
    <location>
        <begin position="259"/>
        <end position="270"/>
    </location>
</feature>
<gene>
    <name type="primary">nsmce1</name>
</gene>
<dbReference type="EC" id="2.3.2.27" evidence="1"/>
<dbReference type="EMBL" id="BC061348">
    <property type="protein sequence ID" value="AAH61348.1"/>
    <property type="molecule type" value="mRNA"/>
</dbReference>
<dbReference type="RefSeq" id="NP_989014.1">
    <property type="nucleotide sequence ID" value="NM_203683.1"/>
</dbReference>
<dbReference type="SMR" id="Q6P881"/>
<dbReference type="FunCoup" id="Q6P881">
    <property type="interactions" value="2197"/>
</dbReference>
<dbReference type="STRING" id="8364.ENSXETP00000045167"/>
<dbReference type="PaxDb" id="8364-ENSXETP00000054235"/>
<dbReference type="DNASU" id="394610"/>
<dbReference type="GeneID" id="394610"/>
<dbReference type="KEGG" id="xtr:394610"/>
<dbReference type="AGR" id="Xenbase:XB-GENE-1006456"/>
<dbReference type="CTD" id="197370"/>
<dbReference type="Xenbase" id="XB-GENE-1006456">
    <property type="gene designation" value="nsmce1"/>
</dbReference>
<dbReference type="eggNOG" id="KOG4718">
    <property type="taxonomic scope" value="Eukaryota"/>
</dbReference>
<dbReference type="InParanoid" id="Q6P881"/>
<dbReference type="OMA" id="WPGDKFV"/>
<dbReference type="OrthoDB" id="185455at2759"/>
<dbReference type="Proteomes" id="UP000008143">
    <property type="component" value="Chromosome 9"/>
</dbReference>
<dbReference type="GO" id="GO:0000781">
    <property type="term" value="C:chromosome, telomeric region"/>
    <property type="evidence" value="ECO:0007669"/>
    <property type="project" value="UniProtKB-SubCell"/>
</dbReference>
<dbReference type="GO" id="GO:0005634">
    <property type="term" value="C:nucleus"/>
    <property type="evidence" value="ECO:0007669"/>
    <property type="project" value="UniProtKB-SubCell"/>
</dbReference>
<dbReference type="GO" id="GO:0030915">
    <property type="term" value="C:Smc5-Smc6 complex"/>
    <property type="evidence" value="ECO:0000250"/>
    <property type="project" value="UniProtKB"/>
</dbReference>
<dbReference type="GO" id="GO:0046983">
    <property type="term" value="F:protein dimerization activity"/>
    <property type="evidence" value="ECO:0000250"/>
    <property type="project" value="UniProtKB"/>
</dbReference>
<dbReference type="GO" id="GO:0061630">
    <property type="term" value="F:ubiquitin protein ligase activity"/>
    <property type="evidence" value="ECO:0000250"/>
    <property type="project" value="UniProtKB"/>
</dbReference>
<dbReference type="GO" id="GO:0008270">
    <property type="term" value="F:zinc ion binding"/>
    <property type="evidence" value="ECO:0007669"/>
    <property type="project" value="UniProtKB-KW"/>
</dbReference>
<dbReference type="GO" id="GO:0006974">
    <property type="term" value="P:DNA damage response"/>
    <property type="evidence" value="ECO:0000250"/>
    <property type="project" value="UniProtKB"/>
</dbReference>
<dbReference type="GO" id="GO:0006310">
    <property type="term" value="P:DNA recombination"/>
    <property type="evidence" value="ECO:0007669"/>
    <property type="project" value="UniProtKB-KW"/>
</dbReference>
<dbReference type="GO" id="GO:0006281">
    <property type="term" value="P:DNA repair"/>
    <property type="evidence" value="ECO:0007669"/>
    <property type="project" value="UniProtKB-KW"/>
</dbReference>
<dbReference type="CDD" id="cd16493">
    <property type="entry name" value="RING-CH-C4HC3_NSE1"/>
    <property type="match status" value="1"/>
</dbReference>
<dbReference type="FunFam" id="1.10.10.10:FF:000270">
    <property type="entry name" value="Non-structural maintenance of chromosomes element 1 homolog"/>
    <property type="match status" value="1"/>
</dbReference>
<dbReference type="FunFam" id="3.90.1150.220:FF:000001">
    <property type="entry name" value="Non-structural maintenance of chromosomes element 1 homolog"/>
    <property type="match status" value="1"/>
</dbReference>
<dbReference type="Gene3D" id="3.90.1150.220">
    <property type="match status" value="1"/>
</dbReference>
<dbReference type="Gene3D" id="1.10.10.10">
    <property type="entry name" value="Winged helix-like DNA-binding domain superfamily/Winged helix DNA-binding domain"/>
    <property type="match status" value="1"/>
</dbReference>
<dbReference type="Gene3D" id="3.30.40.10">
    <property type="entry name" value="Zinc/RING finger domain, C3HC4 (zinc finger)"/>
    <property type="match status" value="1"/>
</dbReference>
<dbReference type="InterPro" id="IPR046349">
    <property type="entry name" value="C1-like_sf"/>
</dbReference>
<dbReference type="InterPro" id="IPR011513">
    <property type="entry name" value="Nse1"/>
</dbReference>
<dbReference type="InterPro" id="IPR014857">
    <property type="entry name" value="Nse1_RING_C4HC3-type"/>
</dbReference>
<dbReference type="InterPro" id="IPR036388">
    <property type="entry name" value="WH-like_DNA-bd_sf"/>
</dbReference>
<dbReference type="InterPro" id="IPR013083">
    <property type="entry name" value="Znf_RING/FYVE/PHD"/>
</dbReference>
<dbReference type="PANTHER" id="PTHR20973">
    <property type="entry name" value="NON-SMC ELEMENT 1-RELATED"/>
    <property type="match status" value="1"/>
</dbReference>
<dbReference type="PANTHER" id="PTHR20973:SF0">
    <property type="entry name" value="NON-STRUCTURAL MAINTENANCE OF CHROMOSOMES ELEMENT 1 HOMOLOG"/>
    <property type="match status" value="1"/>
</dbReference>
<dbReference type="Pfam" id="PF07574">
    <property type="entry name" value="SMC_Nse1"/>
    <property type="match status" value="2"/>
</dbReference>
<dbReference type="Pfam" id="PF08746">
    <property type="entry name" value="zf-RING-like"/>
    <property type="match status" value="1"/>
</dbReference>
<dbReference type="SUPFAM" id="SSF57889">
    <property type="entry name" value="Cysteine-rich domain"/>
    <property type="match status" value="1"/>
</dbReference>
<name>NSE1_XENTR</name>
<organism>
    <name type="scientific">Xenopus tropicalis</name>
    <name type="common">Western clawed frog</name>
    <name type="synonym">Silurana tropicalis</name>
    <dbReference type="NCBI Taxonomy" id="8364"/>
    <lineage>
        <taxon>Eukaryota</taxon>
        <taxon>Metazoa</taxon>
        <taxon>Chordata</taxon>
        <taxon>Craniata</taxon>
        <taxon>Vertebrata</taxon>
        <taxon>Euteleostomi</taxon>
        <taxon>Amphibia</taxon>
        <taxon>Batrachia</taxon>
        <taxon>Anura</taxon>
        <taxon>Pipoidea</taxon>
        <taxon>Pipidae</taxon>
        <taxon>Xenopodinae</taxon>
        <taxon>Xenopus</taxon>
        <taxon>Silurana</taxon>
    </lineage>
</organism>
<sequence>MAEQINESHQRFLQVLMSHGIMESSLVRALHRHCCEVHKVNYMHDNLDDFVGVLNKHLQPLFMKIEKGVGEEDGLTYYALVNRVENDITKMASDYAENELELFRKTMELIIISENGFAPPISILNLADELQSKKMKKKEVEQLLQSFVQDKWLIGRNGEYTLHTRCIMELEHYILNTYQDVAKICNVCHKIAIQCQLCENCGIPLHLQCAGIYFRGIANPLCPNCKESWPHEIPDLSQVSSQGPSHSQAAPVRGRNQRSRNISTVARTSR</sequence>
<protein>
    <recommendedName>
        <fullName>Non-structural maintenance of chromosomes element 1 homolog</fullName>
        <shortName>Non-SMC element 1 homolog</shortName>
        <ecNumber evidence="1">2.3.2.27</ecNumber>
    </recommendedName>
</protein>
<comment type="function">
    <text evidence="1">RING-type zinc finger-containing E3 ubiquitin ligase that assembles with melanoma antigen protein (MAGE) to catalyze the direct transfer of ubiquitin from E2 ubiquitin-conjugating enzyme to a specific substrate. Within MAGE-RING ubiquitin ligase complex, MAGE stimulates and specifies ubiquitin ligase activity likely through recruitment and/or stabilization of the E2 ubiquitin-conjugating enzyme at the E3:substrate complex. Involved in maintenance of genome integrity, DNA damage response and DNA repair.</text>
</comment>
<comment type="catalytic activity">
    <reaction evidence="1">
        <text>S-ubiquitinyl-[E2 ubiquitin-conjugating enzyme]-L-cysteine + [acceptor protein]-L-lysine = [E2 ubiquitin-conjugating enzyme]-L-cysteine + N(6)-ubiquitinyl-[acceptor protein]-L-lysine.</text>
        <dbReference type="EC" id="2.3.2.27"/>
    </reaction>
</comment>
<comment type="subunit">
    <text evidence="1">Component of the SMC5-SMC6 complex.</text>
</comment>
<comment type="subcellular location">
    <subcellularLocation>
        <location evidence="1">Nucleus</location>
    </subcellularLocation>
    <subcellularLocation>
        <location evidence="1">Chromosome</location>
        <location evidence="1">Telomere</location>
    </subcellularLocation>
</comment>
<comment type="similarity">
    <text evidence="4">Belongs to the NSE1 family.</text>
</comment>